<sequence>MAVPKKRTSILKKRIRKNLWKKGGYWAALKAFSLAKSLATGNSKSFFCTTNK</sequence>
<reference key="1">
    <citation type="journal article" date="2006" name="BMC Plant Biol.">
        <title>The complete chloroplast genome sequence of Citrus sinensis (L.) Osbeck var 'Ridge Pineapple': organization and phylogenetic relationships to other angiosperms.</title>
        <authorList>
            <person name="Bausher M.G."/>
            <person name="Singh N.D."/>
            <person name="Lee S.-B."/>
            <person name="Jansen R.K."/>
            <person name="Daniell H."/>
        </authorList>
    </citation>
    <scope>NUCLEOTIDE SEQUENCE [LARGE SCALE GENOMIC DNA]</scope>
    <source>
        <strain>cv. Osbeck var. Ridge Pineapple</strain>
    </source>
</reference>
<geneLocation type="chloroplast"/>
<proteinExistence type="inferred from homology"/>
<comment type="subcellular location">
    <subcellularLocation>
        <location>Plastid</location>
        <location>Chloroplast</location>
    </subcellularLocation>
</comment>
<comment type="similarity">
    <text evidence="1">Belongs to the bacterial ribosomal protein bL32 family.</text>
</comment>
<dbReference type="EMBL" id="DQ864733">
    <property type="protein sequence ID" value="ABI49069.1"/>
    <property type="molecule type" value="Genomic_DNA"/>
</dbReference>
<dbReference type="RefSeq" id="YP_740525.1">
    <property type="nucleotide sequence ID" value="NC_008334.1"/>
</dbReference>
<dbReference type="SMR" id="Q09MC8"/>
<dbReference type="GeneID" id="4271111"/>
<dbReference type="KEGG" id="cit:4271111"/>
<dbReference type="GO" id="GO:0009507">
    <property type="term" value="C:chloroplast"/>
    <property type="evidence" value="ECO:0007669"/>
    <property type="project" value="UniProtKB-SubCell"/>
</dbReference>
<dbReference type="GO" id="GO:0015934">
    <property type="term" value="C:large ribosomal subunit"/>
    <property type="evidence" value="ECO:0007669"/>
    <property type="project" value="InterPro"/>
</dbReference>
<dbReference type="GO" id="GO:0003735">
    <property type="term" value="F:structural constituent of ribosome"/>
    <property type="evidence" value="ECO:0007669"/>
    <property type="project" value="InterPro"/>
</dbReference>
<dbReference type="GO" id="GO:0006412">
    <property type="term" value="P:translation"/>
    <property type="evidence" value="ECO:0007669"/>
    <property type="project" value="UniProtKB-UniRule"/>
</dbReference>
<dbReference type="HAMAP" id="MF_00340">
    <property type="entry name" value="Ribosomal_bL32"/>
    <property type="match status" value="1"/>
</dbReference>
<dbReference type="InterPro" id="IPR002677">
    <property type="entry name" value="Ribosomal_bL32"/>
</dbReference>
<dbReference type="InterPro" id="IPR044958">
    <property type="entry name" value="Ribosomal_bL32_plant/cyanobact"/>
</dbReference>
<dbReference type="InterPro" id="IPR011332">
    <property type="entry name" value="Ribosomal_zn-bd"/>
</dbReference>
<dbReference type="PANTHER" id="PTHR36083">
    <property type="entry name" value="50S RIBOSOMAL PROTEIN L32, CHLOROPLASTIC"/>
    <property type="match status" value="1"/>
</dbReference>
<dbReference type="PANTHER" id="PTHR36083:SF1">
    <property type="entry name" value="LARGE RIBOSOMAL SUBUNIT PROTEIN BL32C"/>
    <property type="match status" value="1"/>
</dbReference>
<dbReference type="SUPFAM" id="SSF57829">
    <property type="entry name" value="Zn-binding ribosomal proteins"/>
    <property type="match status" value="1"/>
</dbReference>
<accession>Q09MC8</accession>
<keyword id="KW-0150">Chloroplast</keyword>
<keyword id="KW-0934">Plastid</keyword>
<keyword id="KW-0687">Ribonucleoprotein</keyword>
<keyword id="KW-0689">Ribosomal protein</keyword>
<gene>
    <name evidence="1" type="primary">rpl32</name>
</gene>
<feature type="chain" id="PRO_0000276463" description="Large ribosomal subunit protein bL32c">
    <location>
        <begin position="1"/>
        <end position="52"/>
    </location>
</feature>
<protein>
    <recommendedName>
        <fullName evidence="1">Large ribosomal subunit protein bL32c</fullName>
    </recommendedName>
    <alternativeName>
        <fullName evidence="2">50S ribosomal protein L32, chloroplastic</fullName>
    </alternativeName>
</protein>
<organism>
    <name type="scientific">Citrus sinensis</name>
    <name type="common">Sweet orange</name>
    <name type="synonym">Citrus aurantium var. sinensis</name>
    <dbReference type="NCBI Taxonomy" id="2711"/>
    <lineage>
        <taxon>Eukaryota</taxon>
        <taxon>Viridiplantae</taxon>
        <taxon>Streptophyta</taxon>
        <taxon>Embryophyta</taxon>
        <taxon>Tracheophyta</taxon>
        <taxon>Spermatophyta</taxon>
        <taxon>Magnoliopsida</taxon>
        <taxon>eudicotyledons</taxon>
        <taxon>Gunneridae</taxon>
        <taxon>Pentapetalae</taxon>
        <taxon>rosids</taxon>
        <taxon>malvids</taxon>
        <taxon>Sapindales</taxon>
        <taxon>Rutaceae</taxon>
        <taxon>Aurantioideae</taxon>
        <taxon>Citrus</taxon>
    </lineage>
</organism>
<evidence type="ECO:0000255" key="1">
    <source>
        <dbReference type="HAMAP-Rule" id="MF_00340"/>
    </source>
</evidence>
<evidence type="ECO:0000305" key="2"/>
<name>RK32_CITSI</name>